<feature type="chain" id="PRO_1000085619" description="Uracil phosphoribosyltransferase">
    <location>
        <begin position="1"/>
        <end position="208"/>
    </location>
</feature>
<feature type="binding site" evidence="1">
    <location>
        <position position="78"/>
    </location>
    <ligand>
        <name>5-phospho-alpha-D-ribose 1-diphosphate</name>
        <dbReference type="ChEBI" id="CHEBI:58017"/>
    </ligand>
</feature>
<feature type="binding site" evidence="1">
    <location>
        <position position="103"/>
    </location>
    <ligand>
        <name>5-phospho-alpha-D-ribose 1-diphosphate</name>
        <dbReference type="ChEBI" id="CHEBI:58017"/>
    </ligand>
</feature>
<feature type="binding site" evidence="1">
    <location>
        <begin position="130"/>
        <end position="138"/>
    </location>
    <ligand>
        <name>5-phospho-alpha-D-ribose 1-diphosphate</name>
        <dbReference type="ChEBI" id="CHEBI:58017"/>
    </ligand>
</feature>
<feature type="binding site" evidence="1">
    <location>
        <position position="193"/>
    </location>
    <ligand>
        <name>uracil</name>
        <dbReference type="ChEBI" id="CHEBI:17568"/>
    </ligand>
</feature>
<feature type="binding site" evidence="1">
    <location>
        <begin position="198"/>
        <end position="200"/>
    </location>
    <ligand>
        <name>uracil</name>
        <dbReference type="ChEBI" id="CHEBI:17568"/>
    </ligand>
</feature>
<feature type="binding site" evidence="1">
    <location>
        <position position="199"/>
    </location>
    <ligand>
        <name>5-phospho-alpha-D-ribose 1-diphosphate</name>
        <dbReference type="ChEBI" id="CHEBI:58017"/>
    </ligand>
</feature>
<dbReference type="EC" id="2.4.2.9" evidence="1"/>
<dbReference type="EMBL" id="CP000896">
    <property type="protein sequence ID" value="ABX80832.1"/>
    <property type="molecule type" value="Genomic_DNA"/>
</dbReference>
<dbReference type="RefSeq" id="WP_012242163.1">
    <property type="nucleotide sequence ID" value="NC_010163.1"/>
</dbReference>
<dbReference type="SMR" id="A9NEQ2"/>
<dbReference type="STRING" id="441768.ACL_0206"/>
<dbReference type="GeneID" id="41338397"/>
<dbReference type="KEGG" id="acl:ACL_0206"/>
<dbReference type="eggNOG" id="COG0035">
    <property type="taxonomic scope" value="Bacteria"/>
</dbReference>
<dbReference type="HOGENOM" id="CLU_067096_2_2_14"/>
<dbReference type="OrthoDB" id="9781675at2"/>
<dbReference type="UniPathway" id="UPA00574">
    <property type="reaction ID" value="UER00636"/>
</dbReference>
<dbReference type="Proteomes" id="UP000008558">
    <property type="component" value="Chromosome"/>
</dbReference>
<dbReference type="GO" id="GO:0005525">
    <property type="term" value="F:GTP binding"/>
    <property type="evidence" value="ECO:0007669"/>
    <property type="project" value="UniProtKB-KW"/>
</dbReference>
<dbReference type="GO" id="GO:0000287">
    <property type="term" value="F:magnesium ion binding"/>
    <property type="evidence" value="ECO:0007669"/>
    <property type="project" value="UniProtKB-UniRule"/>
</dbReference>
<dbReference type="GO" id="GO:0004845">
    <property type="term" value="F:uracil phosphoribosyltransferase activity"/>
    <property type="evidence" value="ECO:0007669"/>
    <property type="project" value="UniProtKB-UniRule"/>
</dbReference>
<dbReference type="GO" id="GO:0044206">
    <property type="term" value="P:UMP salvage"/>
    <property type="evidence" value="ECO:0007669"/>
    <property type="project" value="UniProtKB-UniRule"/>
</dbReference>
<dbReference type="GO" id="GO:0006223">
    <property type="term" value="P:uracil salvage"/>
    <property type="evidence" value="ECO:0007669"/>
    <property type="project" value="InterPro"/>
</dbReference>
<dbReference type="CDD" id="cd06223">
    <property type="entry name" value="PRTases_typeI"/>
    <property type="match status" value="1"/>
</dbReference>
<dbReference type="FunFam" id="3.40.50.2020:FF:000003">
    <property type="entry name" value="Uracil phosphoribosyltransferase"/>
    <property type="match status" value="1"/>
</dbReference>
<dbReference type="Gene3D" id="3.40.50.2020">
    <property type="match status" value="1"/>
</dbReference>
<dbReference type="HAMAP" id="MF_01218_B">
    <property type="entry name" value="Upp_B"/>
    <property type="match status" value="1"/>
</dbReference>
<dbReference type="InterPro" id="IPR000836">
    <property type="entry name" value="PRibTrfase_dom"/>
</dbReference>
<dbReference type="InterPro" id="IPR029057">
    <property type="entry name" value="PRTase-like"/>
</dbReference>
<dbReference type="InterPro" id="IPR034332">
    <property type="entry name" value="Upp_B"/>
</dbReference>
<dbReference type="InterPro" id="IPR050054">
    <property type="entry name" value="UPRTase/APRTase"/>
</dbReference>
<dbReference type="InterPro" id="IPR005765">
    <property type="entry name" value="Ura_phspho_trans"/>
</dbReference>
<dbReference type="NCBIfam" id="NF001097">
    <property type="entry name" value="PRK00129.1"/>
    <property type="match status" value="1"/>
</dbReference>
<dbReference type="NCBIfam" id="TIGR01091">
    <property type="entry name" value="upp"/>
    <property type="match status" value="1"/>
</dbReference>
<dbReference type="PANTHER" id="PTHR32315">
    <property type="entry name" value="ADENINE PHOSPHORIBOSYLTRANSFERASE"/>
    <property type="match status" value="1"/>
</dbReference>
<dbReference type="PANTHER" id="PTHR32315:SF4">
    <property type="entry name" value="URACIL PHOSPHORIBOSYLTRANSFERASE, CHLOROPLASTIC"/>
    <property type="match status" value="1"/>
</dbReference>
<dbReference type="Pfam" id="PF14681">
    <property type="entry name" value="UPRTase"/>
    <property type="match status" value="1"/>
</dbReference>
<dbReference type="SUPFAM" id="SSF53271">
    <property type="entry name" value="PRTase-like"/>
    <property type="match status" value="1"/>
</dbReference>
<gene>
    <name evidence="1" type="primary">upp</name>
    <name type="ordered locus">ACL_0206</name>
</gene>
<evidence type="ECO:0000255" key="1">
    <source>
        <dbReference type="HAMAP-Rule" id="MF_01218"/>
    </source>
</evidence>
<organism>
    <name type="scientific">Acholeplasma laidlawii (strain PG-8A)</name>
    <dbReference type="NCBI Taxonomy" id="441768"/>
    <lineage>
        <taxon>Bacteria</taxon>
        <taxon>Bacillati</taxon>
        <taxon>Mycoplasmatota</taxon>
        <taxon>Mollicutes</taxon>
        <taxon>Acholeplasmatales</taxon>
        <taxon>Acholeplasmataceae</taxon>
        <taxon>Acholeplasma</taxon>
    </lineage>
</organism>
<proteinExistence type="inferred from homology"/>
<keyword id="KW-0021">Allosteric enzyme</keyword>
<keyword id="KW-0328">Glycosyltransferase</keyword>
<keyword id="KW-0342">GTP-binding</keyword>
<keyword id="KW-0460">Magnesium</keyword>
<keyword id="KW-0547">Nucleotide-binding</keyword>
<keyword id="KW-1185">Reference proteome</keyword>
<keyword id="KW-0808">Transferase</keyword>
<sequence length="208" mass="22687">MGKLVVLNHPLIDHKMALIRDKNTSTKTFRETVGEIGALITYEITKDLETVEIEVETPIQKTICRQLKKQLVIVPILRAGLGMVNGIHDMVPSAKIGHIGLYRDEKSLEPVSYYAKFPTDILDGVVLVVDPMLATGGSATAAITELKNRGAKDVRFVGLVGCPEGVKRLQMDHPDVPIYLAALDEKLNEVGYIVPGLGDAGDRLFGTK</sequence>
<name>UPP_ACHLI</name>
<protein>
    <recommendedName>
        <fullName evidence="1">Uracil phosphoribosyltransferase</fullName>
        <ecNumber evidence="1">2.4.2.9</ecNumber>
    </recommendedName>
    <alternativeName>
        <fullName evidence="1">UMP pyrophosphorylase</fullName>
    </alternativeName>
    <alternativeName>
        <fullName evidence="1">UPRTase</fullName>
    </alternativeName>
</protein>
<accession>A9NEQ2</accession>
<reference key="1">
    <citation type="journal article" date="2011" name="J. Bacteriol.">
        <title>Complete genome and proteome of Acholeplasma laidlawii.</title>
        <authorList>
            <person name="Lazarev V.N."/>
            <person name="Levitskii S.A."/>
            <person name="Basovskii Y.I."/>
            <person name="Chukin M.M."/>
            <person name="Akopian T.A."/>
            <person name="Vereshchagin V.V."/>
            <person name="Kostrjukova E.S."/>
            <person name="Kovaleva G.Y."/>
            <person name="Kazanov M.D."/>
            <person name="Malko D.B."/>
            <person name="Vitreschak A.G."/>
            <person name="Sernova N.V."/>
            <person name="Gelfand M.S."/>
            <person name="Demina I.A."/>
            <person name="Serebryakova M.V."/>
            <person name="Galyamina M.A."/>
            <person name="Vtyurin N.N."/>
            <person name="Rogov S.I."/>
            <person name="Alexeev D.G."/>
            <person name="Ladygina V.G."/>
            <person name="Govorun V.M."/>
        </authorList>
    </citation>
    <scope>NUCLEOTIDE SEQUENCE [LARGE SCALE GENOMIC DNA]</scope>
    <source>
        <strain>PG-8A</strain>
    </source>
</reference>
<comment type="function">
    <text evidence="1">Catalyzes the conversion of uracil and 5-phospho-alpha-D-ribose 1-diphosphate (PRPP) to UMP and diphosphate.</text>
</comment>
<comment type="catalytic activity">
    <reaction evidence="1">
        <text>UMP + diphosphate = 5-phospho-alpha-D-ribose 1-diphosphate + uracil</text>
        <dbReference type="Rhea" id="RHEA:13017"/>
        <dbReference type="ChEBI" id="CHEBI:17568"/>
        <dbReference type="ChEBI" id="CHEBI:33019"/>
        <dbReference type="ChEBI" id="CHEBI:57865"/>
        <dbReference type="ChEBI" id="CHEBI:58017"/>
        <dbReference type="EC" id="2.4.2.9"/>
    </reaction>
</comment>
<comment type="cofactor">
    <cofactor evidence="1">
        <name>Mg(2+)</name>
        <dbReference type="ChEBI" id="CHEBI:18420"/>
    </cofactor>
    <text evidence="1">Binds 1 Mg(2+) ion per subunit. The magnesium is bound as Mg-PRPP.</text>
</comment>
<comment type="activity regulation">
    <text evidence="1">Allosterically activated by GTP.</text>
</comment>
<comment type="pathway">
    <text evidence="1">Pyrimidine metabolism; UMP biosynthesis via salvage pathway; UMP from uracil: step 1/1.</text>
</comment>
<comment type="similarity">
    <text evidence="1">Belongs to the UPRTase family.</text>
</comment>